<reference key="1">
    <citation type="journal article" date="2001" name="Nucleic Acids Res.">
        <title>The complete genome sequence of the murine respiratory pathogen Mycoplasma pulmonis.</title>
        <authorList>
            <person name="Chambaud I."/>
            <person name="Heilig R."/>
            <person name="Ferris S."/>
            <person name="Barbe V."/>
            <person name="Samson D."/>
            <person name="Galisson F."/>
            <person name="Moszer I."/>
            <person name="Dybvig K."/>
            <person name="Wroblewski H."/>
            <person name="Viari A."/>
            <person name="Rocha E.P.C."/>
            <person name="Blanchard A."/>
        </authorList>
    </citation>
    <scope>NUCLEOTIDE SEQUENCE [LARGE SCALE GENOMIC DNA]</scope>
    <source>
        <strain>UAB CTIP</strain>
    </source>
</reference>
<comment type="function">
    <text evidence="1">5'-3' exonuclease acting preferentially on double-stranded DNA.</text>
</comment>
<keyword id="KW-0238">DNA-binding</keyword>
<keyword id="KW-0269">Exonuclease</keyword>
<keyword id="KW-0378">Hydrolase</keyword>
<keyword id="KW-0540">Nuclease</keyword>
<keyword id="KW-1185">Reference proteome</keyword>
<protein>
    <recommendedName>
        <fullName>5'-3' exonuclease</fullName>
        <ecNumber>3.1.11.-</ecNumber>
    </recommendedName>
</protein>
<evidence type="ECO:0000250" key="1"/>
<evidence type="ECO:0000255" key="2"/>
<accession>Q98PK2</accession>
<dbReference type="EC" id="3.1.11.-"/>
<dbReference type="EMBL" id="AL445565">
    <property type="protein sequence ID" value="CAC13893.1"/>
    <property type="molecule type" value="Genomic_DNA"/>
</dbReference>
<dbReference type="PIR" id="H90601">
    <property type="entry name" value="H90601"/>
</dbReference>
<dbReference type="RefSeq" id="WP_010925521.1">
    <property type="nucleotide sequence ID" value="NC_002771.1"/>
</dbReference>
<dbReference type="SMR" id="Q98PK2"/>
<dbReference type="STRING" id="272635.gene:17577331"/>
<dbReference type="KEGG" id="mpu:MYPU_7200"/>
<dbReference type="eggNOG" id="COG0258">
    <property type="taxonomic scope" value="Bacteria"/>
</dbReference>
<dbReference type="HOGENOM" id="CLU_004675_1_5_14"/>
<dbReference type="BioCyc" id="MPUL272635:G1GT6-733-MONOMER"/>
<dbReference type="Proteomes" id="UP000000528">
    <property type="component" value="Chromosome"/>
</dbReference>
<dbReference type="GO" id="GO:0008409">
    <property type="term" value="F:5'-3' exonuclease activity"/>
    <property type="evidence" value="ECO:0007669"/>
    <property type="project" value="InterPro"/>
</dbReference>
<dbReference type="GO" id="GO:0017108">
    <property type="term" value="F:5'-flap endonuclease activity"/>
    <property type="evidence" value="ECO:0007669"/>
    <property type="project" value="InterPro"/>
</dbReference>
<dbReference type="GO" id="GO:0003677">
    <property type="term" value="F:DNA binding"/>
    <property type="evidence" value="ECO:0007669"/>
    <property type="project" value="UniProtKB-KW"/>
</dbReference>
<dbReference type="GO" id="GO:0033567">
    <property type="term" value="P:DNA replication, Okazaki fragment processing"/>
    <property type="evidence" value="ECO:0007669"/>
    <property type="project" value="InterPro"/>
</dbReference>
<dbReference type="CDD" id="cd09898">
    <property type="entry name" value="H3TH_53EXO"/>
    <property type="match status" value="1"/>
</dbReference>
<dbReference type="CDD" id="cd09859">
    <property type="entry name" value="PIN_53EXO"/>
    <property type="match status" value="1"/>
</dbReference>
<dbReference type="FunFam" id="1.10.150.20:FF:000003">
    <property type="entry name" value="DNA polymerase I"/>
    <property type="match status" value="1"/>
</dbReference>
<dbReference type="Gene3D" id="1.10.150.20">
    <property type="entry name" value="5' to 3' exonuclease, C-terminal subdomain"/>
    <property type="match status" value="1"/>
</dbReference>
<dbReference type="Gene3D" id="3.40.50.1010">
    <property type="entry name" value="5'-nuclease"/>
    <property type="match status" value="1"/>
</dbReference>
<dbReference type="InterPro" id="IPR020046">
    <property type="entry name" value="5-3_exonucl_a-hlix_arch_N"/>
</dbReference>
<dbReference type="InterPro" id="IPR002421">
    <property type="entry name" value="5-3_exonuclease"/>
</dbReference>
<dbReference type="InterPro" id="IPR036279">
    <property type="entry name" value="5-3_exonuclease_C_sf"/>
</dbReference>
<dbReference type="InterPro" id="IPR020045">
    <property type="entry name" value="DNA_polI_H3TH"/>
</dbReference>
<dbReference type="InterPro" id="IPR038969">
    <property type="entry name" value="FEN"/>
</dbReference>
<dbReference type="InterPro" id="IPR008918">
    <property type="entry name" value="HhH2"/>
</dbReference>
<dbReference type="InterPro" id="IPR029060">
    <property type="entry name" value="PIN-like_dom_sf"/>
</dbReference>
<dbReference type="PANTHER" id="PTHR42646:SF2">
    <property type="entry name" value="5'-3' EXONUCLEASE FAMILY PROTEIN"/>
    <property type="match status" value="1"/>
</dbReference>
<dbReference type="PANTHER" id="PTHR42646">
    <property type="entry name" value="FLAP ENDONUCLEASE XNI"/>
    <property type="match status" value="1"/>
</dbReference>
<dbReference type="Pfam" id="PF01367">
    <property type="entry name" value="5_3_exonuc"/>
    <property type="match status" value="1"/>
</dbReference>
<dbReference type="Pfam" id="PF02739">
    <property type="entry name" value="5_3_exonuc_N"/>
    <property type="match status" value="1"/>
</dbReference>
<dbReference type="SMART" id="SM00475">
    <property type="entry name" value="53EXOc"/>
    <property type="match status" value="1"/>
</dbReference>
<dbReference type="SMART" id="SM00279">
    <property type="entry name" value="HhH2"/>
    <property type="match status" value="1"/>
</dbReference>
<dbReference type="SUPFAM" id="SSF47807">
    <property type="entry name" value="5' to 3' exonuclease, C-terminal subdomain"/>
    <property type="match status" value="1"/>
</dbReference>
<dbReference type="SUPFAM" id="SSF88723">
    <property type="entry name" value="PIN domain-like"/>
    <property type="match status" value="1"/>
</dbReference>
<gene>
    <name type="primary">polA</name>
    <name type="ordered locus">MYPU_7200</name>
</gene>
<feature type="chain" id="PRO_0000101288" description="5'-3' exonuclease">
    <location>
        <begin position="1"/>
        <end position="297"/>
    </location>
</feature>
<feature type="domain" description="5'-3' exonuclease" evidence="2">
    <location>
        <begin position="171"/>
        <end position="262"/>
    </location>
</feature>
<organism>
    <name type="scientific">Mycoplasmopsis pulmonis (strain UAB CTIP)</name>
    <name type="common">Mycoplasma pulmonis</name>
    <dbReference type="NCBI Taxonomy" id="272635"/>
    <lineage>
        <taxon>Bacteria</taxon>
        <taxon>Bacillati</taxon>
        <taxon>Mycoplasmatota</taxon>
        <taxon>Mycoplasmoidales</taxon>
        <taxon>Metamycoplasmataceae</taxon>
        <taxon>Mycoplasmopsis</taxon>
    </lineage>
</organism>
<sequence length="297" mass="34755">MTKSGSKSEKFLLIDGNYLVHRSYYVSFKFKNNFRSTIYLFFQTIIKIIKNLNPENIFIAFDEEGGTWRHDLCKEYKSQRSKMEDEFWNIFKAIREILDSINLNSGGFRGHEADDVIATITSKFKDENQIYIFSRDKDLLQLIDKNVYITHDNELKNLISIENFYQNFQLEPDQIVDFKAIAGDSSDNLKGIAGIGEKGAKNLLNNFKSLEKIFDSLESTNLISKAQKQKIRDGKEQALFLKKIVTLNKEVPMKLEKELFAIKININEEILEKLDKYDSRYVLKQFEKALESDDYLW</sequence>
<proteinExistence type="inferred from homology"/>
<name>EX53_MYCPU</name>